<feature type="initiator methionine" description="Removed" evidence="5">
    <location>
        <position position="1"/>
    </location>
</feature>
<feature type="chain" id="PRO_0000420925" description="Mitochondrial import inner membrane translocase subunit TIM14-1">
    <location>
        <begin position="2"/>
        <end position="112"/>
    </location>
</feature>
<feature type="transmembrane region" description="Helical" evidence="2">
    <location>
        <begin position="7"/>
        <end position="23"/>
    </location>
</feature>
<feature type="domain" description="J">
    <location>
        <begin position="53"/>
        <end position="112"/>
    </location>
</feature>
<feature type="modified residue" description="N-acetylalanine" evidence="5">
    <location>
        <position position="2"/>
    </location>
</feature>
<keyword id="KW-0007">Acetylation</keyword>
<keyword id="KW-0472">Membrane</keyword>
<keyword id="KW-0496">Mitochondrion</keyword>
<keyword id="KW-0999">Mitochondrion inner membrane</keyword>
<keyword id="KW-1185">Reference proteome</keyword>
<keyword id="KW-0812">Transmembrane</keyword>
<keyword id="KW-1133">Transmembrane helix</keyword>
<organism>
    <name type="scientific">Arabidopsis thaliana</name>
    <name type="common">Mouse-ear cress</name>
    <dbReference type="NCBI Taxonomy" id="3702"/>
    <lineage>
        <taxon>Eukaryota</taxon>
        <taxon>Viridiplantae</taxon>
        <taxon>Streptophyta</taxon>
        <taxon>Embryophyta</taxon>
        <taxon>Tracheophyta</taxon>
        <taxon>Spermatophyta</taxon>
        <taxon>Magnoliopsida</taxon>
        <taxon>eudicotyledons</taxon>
        <taxon>Gunneridae</taxon>
        <taxon>Pentapetalae</taxon>
        <taxon>rosids</taxon>
        <taxon>malvids</taxon>
        <taxon>Brassicales</taxon>
        <taxon>Brassicaceae</taxon>
        <taxon>Camelineae</taxon>
        <taxon>Arabidopsis</taxon>
    </lineage>
</organism>
<proteinExistence type="evidence at protein level"/>
<protein>
    <recommendedName>
        <fullName>Mitochondrial import inner membrane translocase subunit TIM14-1</fullName>
    </recommendedName>
    <alternativeName>
        <fullName>Chaperone DnaJ-domain containing protein 1</fullName>
    </alternativeName>
</protein>
<name>TI141_ARATH</name>
<accession>Q8RV04</accession>
<dbReference type="EMBL" id="AC006068">
    <property type="protein sequence ID" value="AAM15117.1"/>
    <property type="molecule type" value="Genomic_DNA"/>
</dbReference>
<dbReference type="EMBL" id="AC007017">
    <property type="protein sequence ID" value="AAM15345.1"/>
    <property type="molecule type" value="Genomic_DNA"/>
</dbReference>
<dbReference type="EMBL" id="CP002685">
    <property type="protein sequence ID" value="AEC09162.1"/>
    <property type="molecule type" value="Genomic_DNA"/>
</dbReference>
<dbReference type="EMBL" id="AK228834">
    <property type="protein sequence ID" value="BAF00729.1"/>
    <property type="molecule type" value="mRNA"/>
</dbReference>
<dbReference type="EMBL" id="BT028952">
    <property type="protein sequence ID" value="ABI49499.1"/>
    <property type="molecule type" value="mRNA"/>
</dbReference>
<dbReference type="EMBL" id="AY084569">
    <property type="protein sequence ID" value="AAM61135.1"/>
    <property type="molecule type" value="mRNA"/>
</dbReference>
<dbReference type="RefSeq" id="NP_565824.1">
    <property type="nucleotide sequence ID" value="NM_129138.3"/>
</dbReference>
<dbReference type="SMR" id="Q8RV04"/>
<dbReference type="FunCoup" id="Q8RV04">
    <property type="interactions" value="3141"/>
</dbReference>
<dbReference type="STRING" id="3702.Q8RV04"/>
<dbReference type="iPTMnet" id="Q8RV04"/>
<dbReference type="PaxDb" id="3702-AT2G35795.1"/>
<dbReference type="ProteomicsDB" id="246490"/>
<dbReference type="EnsemblPlants" id="AT2G35795.1">
    <property type="protein sequence ID" value="AT2G35795.1"/>
    <property type="gene ID" value="AT2G35795"/>
</dbReference>
<dbReference type="GeneID" id="818152"/>
<dbReference type="Gramene" id="AT2G35795.1">
    <property type="protein sequence ID" value="AT2G35795.1"/>
    <property type="gene ID" value="AT2G35795"/>
</dbReference>
<dbReference type="KEGG" id="ath:AT2G35795"/>
<dbReference type="Araport" id="AT2G35795"/>
<dbReference type="TAIR" id="AT2G35795"/>
<dbReference type="eggNOG" id="KOG0723">
    <property type="taxonomic scope" value="Eukaryota"/>
</dbReference>
<dbReference type="HOGENOM" id="CLU_017633_13_2_1"/>
<dbReference type="InParanoid" id="Q8RV04"/>
<dbReference type="OMA" id="EPRMNKR"/>
<dbReference type="OrthoDB" id="240298at2759"/>
<dbReference type="PhylomeDB" id="Q8RV04"/>
<dbReference type="PRO" id="PR:Q8RV04"/>
<dbReference type="Proteomes" id="UP000006548">
    <property type="component" value="Chromosome 2"/>
</dbReference>
<dbReference type="ExpressionAtlas" id="Q8RV04">
    <property type="expression patterns" value="baseline and differential"/>
</dbReference>
<dbReference type="GO" id="GO:0005743">
    <property type="term" value="C:mitochondrial inner membrane"/>
    <property type="evidence" value="ECO:0007669"/>
    <property type="project" value="UniProtKB-SubCell"/>
</dbReference>
<dbReference type="CDD" id="cd06257">
    <property type="entry name" value="DnaJ"/>
    <property type="match status" value="1"/>
</dbReference>
<dbReference type="FunFam" id="1.10.287.110:FF:000001">
    <property type="entry name" value="Import inner membrane translocase subunit tim14"/>
    <property type="match status" value="1"/>
</dbReference>
<dbReference type="Gene3D" id="1.10.287.110">
    <property type="entry name" value="DnaJ domain"/>
    <property type="match status" value="1"/>
</dbReference>
<dbReference type="InterPro" id="IPR001623">
    <property type="entry name" value="DnaJ_domain"/>
</dbReference>
<dbReference type="InterPro" id="IPR036869">
    <property type="entry name" value="J_dom_sf"/>
</dbReference>
<dbReference type="PANTHER" id="PTHR12763">
    <property type="match status" value="1"/>
</dbReference>
<dbReference type="PANTHER" id="PTHR12763:SF28">
    <property type="entry name" value="GEO10507P1-RELATED"/>
    <property type="match status" value="1"/>
</dbReference>
<dbReference type="SMART" id="SM00271">
    <property type="entry name" value="DnaJ"/>
    <property type="match status" value="1"/>
</dbReference>
<dbReference type="SUPFAM" id="SSF46565">
    <property type="entry name" value="Chaperone J-domain"/>
    <property type="match status" value="1"/>
</dbReference>
<comment type="function">
    <text evidence="1">Component of the PAM complex, a complex required for the translocation of transit peptide-containing proteins from the inner membrane into the mitochondrial matrix in an ATP-dependent manner.</text>
</comment>
<comment type="subunit">
    <text evidence="1">Probable component of the PAM complex at least composed of a mitochondrial HSP70 protein, TIMM44 and TIMM14. The complex interacts with the TIMM23 component of the TIM17:23 complex (By similarity).</text>
</comment>
<comment type="subcellular location">
    <subcellularLocation>
        <location evidence="3">Mitochondrion</location>
    </subcellularLocation>
    <subcellularLocation>
        <location evidence="1">Mitochondrion inner membrane</location>
        <topology evidence="4">Single-pass membrane protein</topology>
    </subcellularLocation>
</comment>
<comment type="similarity">
    <text evidence="4">Belongs to the TIM14 family.</text>
</comment>
<evidence type="ECO:0000250" key="1"/>
<evidence type="ECO:0000255" key="2"/>
<evidence type="ECO:0000269" key="3">
    <source>
    </source>
</evidence>
<evidence type="ECO:0000305" key="4"/>
<evidence type="ECO:0007744" key="5">
    <source>
    </source>
</evidence>
<gene>
    <name type="primary">TIM14-1</name>
    <name type="ordered locus">At2g35795</name>
    <name type="ORF">T20F21.1</name>
</gene>
<sequence>MATPFIAGVAVAATALAGRYGIQAWQAFKARPPRPKIKKFYEGGFQPTMTKREAALILGVRESVAAEKVKEAHRKVMVANHPDAGGSHFLASKINEAKDVMLGKTKNSGSAF</sequence>
<reference key="1">
    <citation type="journal article" date="1999" name="Nature">
        <title>Sequence and analysis of chromosome 2 of the plant Arabidopsis thaliana.</title>
        <authorList>
            <person name="Lin X."/>
            <person name="Kaul S."/>
            <person name="Rounsley S.D."/>
            <person name="Shea T.P."/>
            <person name="Benito M.-I."/>
            <person name="Town C.D."/>
            <person name="Fujii C.Y."/>
            <person name="Mason T.M."/>
            <person name="Bowman C.L."/>
            <person name="Barnstead M.E."/>
            <person name="Feldblyum T.V."/>
            <person name="Buell C.R."/>
            <person name="Ketchum K.A."/>
            <person name="Lee J.J."/>
            <person name="Ronning C.M."/>
            <person name="Koo H.L."/>
            <person name="Moffat K.S."/>
            <person name="Cronin L.A."/>
            <person name="Shen M."/>
            <person name="Pai G."/>
            <person name="Van Aken S."/>
            <person name="Umayam L."/>
            <person name="Tallon L.J."/>
            <person name="Gill J.E."/>
            <person name="Adams M.D."/>
            <person name="Carrera A.J."/>
            <person name="Creasy T.H."/>
            <person name="Goodman H.M."/>
            <person name="Somerville C.R."/>
            <person name="Copenhaver G.P."/>
            <person name="Preuss D."/>
            <person name="Nierman W.C."/>
            <person name="White O."/>
            <person name="Eisen J.A."/>
            <person name="Salzberg S.L."/>
            <person name="Fraser C.M."/>
            <person name="Venter J.C."/>
        </authorList>
    </citation>
    <scope>NUCLEOTIDE SEQUENCE [LARGE SCALE GENOMIC DNA]</scope>
    <source>
        <strain>cv. Columbia</strain>
    </source>
</reference>
<reference key="2">
    <citation type="journal article" date="2017" name="Plant J.">
        <title>Araport11: a complete reannotation of the Arabidopsis thaliana reference genome.</title>
        <authorList>
            <person name="Cheng C.Y."/>
            <person name="Krishnakumar V."/>
            <person name="Chan A.P."/>
            <person name="Thibaud-Nissen F."/>
            <person name="Schobel S."/>
            <person name="Town C.D."/>
        </authorList>
    </citation>
    <scope>GENOME REANNOTATION</scope>
    <source>
        <strain>cv. Columbia</strain>
    </source>
</reference>
<reference key="3">
    <citation type="submission" date="2006-07" db="EMBL/GenBank/DDBJ databases">
        <title>Large-scale analysis of RIKEN Arabidopsis full-length (RAFL) cDNAs.</title>
        <authorList>
            <person name="Totoki Y."/>
            <person name="Seki M."/>
            <person name="Ishida J."/>
            <person name="Nakajima M."/>
            <person name="Enju A."/>
            <person name="Kamiya A."/>
            <person name="Narusaka M."/>
            <person name="Shin-i T."/>
            <person name="Nakagawa M."/>
            <person name="Sakamoto N."/>
            <person name="Oishi K."/>
            <person name="Kohara Y."/>
            <person name="Kobayashi M."/>
            <person name="Toyoda A."/>
            <person name="Sakaki Y."/>
            <person name="Sakurai T."/>
            <person name="Iida K."/>
            <person name="Akiyama K."/>
            <person name="Satou M."/>
            <person name="Toyoda T."/>
            <person name="Konagaya A."/>
            <person name="Carninci P."/>
            <person name="Kawai J."/>
            <person name="Hayashizaki Y."/>
            <person name="Shinozaki K."/>
        </authorList>
    </citation>
    <scope>NUCLEOTIDE SEQUENCE [LARGE SCALE MRNA]</scope>
    <source>
        <strain>cv. Columbia</strain>
    </source>
</reference>
<reference key="4">
    <citation type="submission" date="2006-09" db="EMBL/GenBank/DDBJ databases">
        <title>Arabidopsis ORF clones.</title>
        <authorList>
            <person name="Quinitio C."/>
            <person name="Chen H."/>
            <person name="Kim C.J."/>
            <person name="Shinn P."/>
            <person name="Ecker J.R."/>
        </authorList>
    </citation>
    <scope>NUCLEOTIDE SEQUENCE [LARGE SCALE MRNA]</scope>
</reference>
<reference key="5">
    <citation type="submission" date="2002-03" db="EMBL/GenBank/DDBJ databases">
        <title>Full-length cDNA from Arabidopsis thaliana.</title>
        <authorList>
            <person name="Brover V.V."/>
            <person name="Troukhan M.E."/>
            <person name="Alexandrov N.A."/>
            <person name="Lu Y.-P."/>
            <person name="Flavell R.B."/>
            <person name="Feldmann K.A."/>
        </authorList>
    </citation>
    <scope>NUCLEOTIDE SEQUENCE [LARGE SCALE MRNA]</scope>
</reference>
<reference key="6">
    <citation type="journal article" date="2007" name="Plant Physiol.">
        <title>Characterization of the preprotein and amino acid transporter gene family in Arabidopsis.</title>
        <authorList>
            <person name="Murcha M.W."/>
            <person name="Elhafez D."/>
            <person name="Lister R."/>
            <person name="Tonti-Filippini J."/>
            <person name="Baumgartner M."/>
            <person name="Philippar K."/>
            <person name="Carrie C."/>
            <person name="Mokranjac D."/>
            <person name="Soll J."/>
            <person name="Whelan J."/>
        </authorList>
    </citation>
    <scope>SUBCELLULAR LOCATION</scope>
</reference>
<reference key="7">
    <citation type="journal article" date="2012" name="Mol. Cell. Proteomics">
        <title>Comparative large-scale characterisation of plant vs. mammal proteins reveals similar and idiosyncratic N-alpha acetylation features.</title>
        <authorList>
            <person name="Bienvenut W.V."/>
            <person name="Sumpton D."/>
            <person name="Martinez A."/>
            <person name="Lilla S."/>
            <person name="Espagne C."/>
            <person name="Meinnel T."/>
            <person name="Giglione C."/>
        </authorList>
    </citation>
    <scope>ACETYLATION [LARGE SCALE ANALYSIS] AT ALA-2</scope>
    <scope>CLEAVAGE OF INITIATOR METHIONINE [LARGE SCALE ANALYSIS]</scope>
    <scope>IDENTIFICATION BY MASS SPECTROMETRY [LARGE SCALE ANALYSIS]</scope>
</reference>